<proteinExistence type="inferred from homology"/>
<feature type="chain" id="PRO_0000261776" description="Large ribosomal subunit protein uL13">
    <location>
        <begin position="1"/>
        <end position="142"/>
    </location>
</feature>
<accession>Q4FRE5</accession>
<organism>
    <name type="scientific">Psychrobacter arcticus (strain DSM 17307 / VKM B-2377 / 273-4)</name>
    <dbReference type="NCBI Taxonomy" id="259536"/>
    <lineage>
        <taxon>Bacteria</taxon>
        <taxon>Pseudomonadati</taxon>
        <taxon>Pseudomonadota</taxon>
        <taxon>Gammaproteobacteria</taxon>
        <taxon>Moraxellales</taxon>
        <taxon>Moraxellaceae</taxon>
        <taxon>Psychrobacter</taxon>
    </lineage>
</organism>
<sequence length="142" mass="15787">MKTLSAKPAEVTHDWYVVDADGKTLGRLATQIATRLRGKHKTCFTPHVDTGDFIVVINAEKIAVTGKKAQDKKYYRHSGYPGGIKETNFTKLIAHKPEDVLHKAVKGMLPKGPLGYAMIKKLKLYAGTEHPHEAQQPKELDI</sequence>
<name>RL13_PSYA2</name>
<keyword id="KW-1185">Reference proteome</keyword>
<keyword id="KW-0687">Ribonucleoprotein</keyword>
<keyword id="KW-0689">Ribosomal protein</keyword>
<gene>
    <name evidence="1" type="primary">rplM</name>
    <name type="ordered locus">Psyc_1565</name>
</gene>
<protein>
    <recommendedName>
        <fullName evidence="1">Large ribosomal subunit protein uL13</fullName>
    </recommendedName>
    <alternativeName>
        <fullName evidence="2">50S ribosomal protein L13</fullName>
    </alternativeName>
</protein>
<dbReference type="EMBL" id="CP000082">
    <property type="protein sequence ID" value="AAZ19413.1"/>
    <property type="molecule type" value="Genomic_DNA"/>
</dbReference>
<dbReference type="RefSeq" id="WP_011280830.1">
    <property type="nucleotide sequence ID" value="NC_007204.1"/>
</dbReference>
<dbReference type="SMR" id="Q4FRE5"/>
<dbReference type="STRING" id="259536.Psyc_1565"/>
<dbReference type="KEGG" id="par:Psyc_1565"/>
<dbReference type="eggNOG" id="COG0102">
    <property type="taxonomic scope" value="Bacteria"/>
</dbReference>
<dbReference type="HOGENOM" id="CLU_082184_2_2_6"/>
<dbReference type="OrthoDB" id="9801330at2"/>
<dbReference type="Proteomes" id="UP000000546">
    <property type="component" value="Chromosome"/>
</dbReference>
<dbReference type="GO" id="GO:0022625">
    <property type="term" value="C:cytosolic large ribosomal subunit"/>
    <property type="evidence" value="ECO:0007669"/>
    <property type="project" value="TreeGrafter"/>
</dbReference>
<dbReference type="GO" id="GO:0003729">
    <property type="term" value="F:mRNA binding"/>
    <property type="evidence" value="ECO:0007669"/>
    <property type="project" value="TreeGrafter"/>
</dbReference>
<dbReference type="GO" id="GO:0003735">
    <property type="term" value="F:structural constituent of ribosome"/>
    <property type="evidence" value="ECO:0007669"/>
    <property type="project" value="InterPro"/>
</dbReference>
<dbReference type="GO" id="GO:0017148">
    <property type="term" value="P:negative regulation of translation"/>
    <property type="evidence" value="ECO:0007669"/>
    <property type="project" value="TreeGrafter"/>
</dbReference>
<dbReference type="GO" id="GO:0006412">
    <property type="term" value="P:translation"/>
    <property type="evidence" value="ECO:0007669"/>
    <property type="project" value="UniProtKB-UniRule"/>
</dbReference>
<dbReference type="CDD" id="cd00392">
    <property type="entry name" value="Ribosomal_L13"/>
    <property type="match status" value="1"/>
</dbReference>
<dbReference type="FunFam" id="3.90.1180.10:FF:000001">
    <property type="entry name" value="50S ribosomal protein L13"/>
    <property type="match status" value="1"/>
</dbReference>
<dbReference type="Gene3D" id="3.90.1180.10">
    <property type="entry name" value="Ribosomal protein L13"/>
    <property type="match status" value="1"/>
</dbReference>
<dbReference type="HAMAP" id="MF_01366">
    <property type="entry name" value="Ribosomal_uL13"/>
    <property type="match status" value="1"/>
</dbReference>
<dbReference type="InterPro" id="IPR005822">
    <property type="entry name" value="Ribosomal_uL13"/>
</dbReference>
<dbReference type="InterPro" id="IPR005823">
    <property type="entry name" value="Ribosomal_uL13_bac-type"/>
</dbReference>
<dbReference type="InterPro" id="IPR036899">
    <property type="entry name" value="Ribosomal_uL13_sf"/>
</dbReference>
<dbReference type="NCBIfam" id="TIGR01066">
    <property type="entry name" value="rplM_bact"/>
    <property type="match status" value="1"/>
</dbReference>
<dbReference type="PANTHER" id="PTHR11545:SF2">
    <property type="entry name" value="LARGE RIBOSOMAL SUBUNIT PROTEIN UL13M"/>
    <property type="match status" value="1"/>
</dbReference>
<dbReference type="PANTHER" id="PTHR11545">
    <property type="entry name" value="RIBOSOMAL PROTEIN L13"/>
    <property type="match status" value="1"/>
</dbReference>
<dbReference type="Pfam" id="PF00572">
    <property type="entry name" value="Ribosomal_L13"/>
    <property type="match status" value="1"/>
</dbReference>
<dbReference type="PIRSF" id="PIRSF002181">
    <property type="entry name" value="Ribosomal_L13"/>
    <property type="match status" value="1"/>
</dbReference>
<dbReference type="SUPFAM" id="SSF52161">
    <property type="entry name" value="Ribosomal protein L13"/>
    <property type="match status" value="1"/>
</dbReference>
<reference key="1">
    <citation type="journal article" date="2010" name="Appl. Environ. Microbiol.">
        <title>The genome sequence of Psychrobacter arcticus 273-4, a psychroactive Siberian permafrost bacterium, reveals mechanisms for adaptation to low-temperature growth.</title>
        <authorList>
            <person name="Ayala-del-Rio H.L."/>
            <person name="Chain P.S."/>
            <person name="Grzymski J.J."/>
            <person name="Ponder M.A."/>
            <person name="Ivanova N."/>
            <person name="Bergholz P.W."/>
            <person name="Di Bartolo G."/>
            <person name="Hauser L."/>
            <person name="Land M."/>
            <person name="Bakermans C."/>
            <person name="Rodrigues D."/>
            <person name="Klappenbach J."/>
            <person name="Zarka D."/>
            <person name="Larimer F."/>
            <person name="Richardson P."/>
            <person name="Murray A."/>
            <person name="Thomashow M."/>
            <person name="Tiedje J.M."/>
        </authorList>
    </citation>
    <scope>NUCLEOTIDE SEQUENCE [LARGE SCALE GENOMIC DNA]</scope>
    <source>
        <strain>DSM 17307 / VKM B-2377 / 273-4</strain>
    </source>
</reference>
<comment type="function">
    <text evidence="1">This protein is one of the early assembly proteins of the 50S ribosomal subunit, although it is not seen to bind rRNA by itself. It is important during the early stages of 50S assembly.</text>
</comment>
<comment type="subunit">
    <text evidence="1">Part of the 50S ribosomal subunit.</text>
</comment>
<comment type="similarity">
    <text evidence="1">Belongs to the universal ribosomal protein uL13 family.</text>
</comment>
<evidence type="ECO:0000255" key="1">
    <source>
        <dbReference type="HAMAP-Rule" id="MF_01366"/>
    </source>
</evidence>
<evidence type="ECO:0000305" key="2"/>